<dbReference type="EC" id="3.1.2.20" evidence="1"/>
<dbReference type="EMBL" id="L02122">
    <property type="protein sequence ID" value="AAD15042.1"/>
    <property type="status" value="ALT_INIT"/>
    <property type="molecule type" value="Genomic_DNA"/>
</dbReference>
<dbReference type="EMBL" id="M87049">
    <property type="protein sequence ID" value="AAA67616.1"/>
    <property type="status" value="ALT_INIT"/>
    <property type="molecule type" value="Genomic_DNA"/>
</dbReference>
<dbReference type="EMBL" id="U00096">
    <property type="protein sequence ID" value="AAC76823.2"/>
    <property type="molecule type" value="Genomic_DNA"/>
</dbReference>
<dbReference type="EMBL" id="AP009048">
    <property type="protein sequence ID" value="BAE77481.1"/>
    <property type="molecule type" value="Genomic_DNA"/>
</dbReference>
<dbReference type="EMBL" id="X02143">
    <property type="status" value="NOT_ANNOTATED_CDS"/>
    <property type="molecule type" value="Genomic_DNA"/>
</dbReference>
<dbReference type="RefSeq" id="NP_418264.4">
    <property type="nucleotide sequence ID" value="NC_000913.3"/>
</dbReference>
<dbReference type="RefSeq" id="WP_001277142.1">
    <property type="nucleotide sequence ID" value="NZ_STEB01000021.1"/>
</dbReference>
<dbReference type="SMR" id="P0ADP2"/>
<dbReference type="BioGRID" id="4261780">
    <property type="interactions" value="20"/>
</dbReference>
<dbReference type="FunCoup" id="P0ADP2">
    <property type="interactions" value="21"/>
</dbReference>
<dbReference type="STRING" id="511145.b3820"/>
<dbReference type="TCDB" id="9.B.371.1.8">
    <property type="family name" value="the paai thioesterase (pte) family"/>
</dbReference>
<dbReference type="jPOST" id="P0ADP2"/>
<dbReference type="PaxDb" id="511145-b3820"/>
<dbReference type="EnsemblBacteria" id="AAC76823">
    <property type="protein sequence ID" value="AAC76823"/>
    <property type="gene ID" value="b3820"/>
</dbReference>
<dbReference type="GeneID" id="93778117"/>
<dbReference type="GeneID" id="948338"/>
<dbReference type="KEGG" id="ecj:JW5588"/>
<dbReference type="KEGG" id="eco:b3820"/>
<dbReference type="KEGG" id="ecoc:C3026_20675"/>
<dbReference type="PATRIC" id="fig|511145.12.peg.3936"/>
<dbReference type="EchoBASE" id="EB1435"/>
<dbReference type="eggNOG" id="COG2050">
    <property type="taxonomic scope" value="Bacteria"/>
</dbReference>
<dbReference type="HOGENOM" id="CLU_089876_7_2_6"/>
<dbReference type="InParanoid" id="P0ADP2"/>
<dbReference type="OMA" id="RMGTIDM"/>
<dbReference type="OrthoDB" id="9813158at2"/>
<dbReference type="PhylomeDB" id="P0ADP2"/>
<dbReference type="BioCyc" id="EcoCyc:EG11467-MONOMER"/>
<dbReference type="BioCyc" id="MetaCyc:EG11467-MONOMER"/>
<dbReference type="PRO" id="PR:P0ADP2"/>
<dbReference type="Proteomes" id="UP000000625">
    <property type="component" value="Chromosome"/>
</dbReference>
<dbReference type="GO" id="GO:0005829">
    <property type="term" value="C:cytosol"/>
    <property type="evidence" value="ECO:0000314"/>
    <property type="project" value="EcoCyc"/>
</dbReference>
<dbReference type="GO" id="GO:0016289">
    <property type="term" value="F:acyl-CoA hydrolase activity"/>
    <property type="evidence" value="ECO:0000314"/>
    <property type="project" value="EcoCyc"/>
</dbReference>
<dbReference type="GO" id="GO:0006629">
    <property type="term" value="P:lipid metabolic process"/>
    <property type="evidence" value="ECO:0007669"/>
    <property type="project" value="UniProtKB-KW"/>
</dbReference>
<dbReference type="GO" id="GO:0032787">
    <property type="term" value="P:monocarboxylic acid metabolic process"/>
    <property type="evidence" value="ECO:0000314"/>
    <property type="project" value="EcoCyc"/>
</dbReference>
<dbReference type="CDD" id="cd03443">
    <property type="entry name" value="PaaI_thioesterase"/>
    <property type="match status" value="1"/>
</dbReference>
<dbReference type="FunFam" id="3.10.129.10:FF:000007">
    <property type="entry name" value="Thioesterase family protein"/>
    <property type="match status" value="1"/>
</dbReference>
<dbReference type="Gene3D" id="3.10.129.10">
    <property type="entry name" value="Hotdog Thioesterase"/>
    <property type="match status" value="1"/>
</dbReference>
<dbReference type="InterPro" id="IPR029069">
    <property type="entry name" value="HotDog_dom_sf"/>
</dbReference>
<dbReference type="InterPro" id="IPR003736">
    <property type="entry name" value="PAAI_dom"/>
</dbReference>
<dbReference type="InterPro" id="IPR006683">
    <property type="entry name" value="Thioestr_dom"/>
</dbReference>
<dbReference type="NCBIfam" id="NF008675">
    <property type="entry name" value="PRK11688.1"/>
    <property type="match status" value="1"/>
</dbReference>
<dbReference type="NCBIfam" id="TIGR00369">
    <property type="entry name" value="unchar_dom_1"/>
    <property type="match status" value="1"/>
</dbReference>
<dbReference type="PANTHER" id="PTHR43240">
    <property type="entry name" value="1,4-DIHYDROXY-2-NAPHTHOYL-COA THIOESTERASE 1"/>
    <property type="match status" value="1"/>
</dbReference>
<dbReference type="PANTHER" id="PTHR43240:SF20">
    <property type="entry name" value="MEDIUM_LONG-CHAIN ACYL-COA THIOESTERASE YIGI"/>
    <property type="match status" value="1"/>
</dbReference>
<dbReference type="Pfam" id="PF03061">
    <property type="entry name" value="4HBT"/>
    <property type="match status" value="1"/>
</dbReference>
<dbReference type="SUPFAM" id="SSF54637">
    <property type="entry name" value="Thioesterase/thiol ester dehydrase-isomerase"/>
    <property type="match status" value="1"/>
</dbReference>
<feature type="chain" id="PRO_0000169658" description="Medium/long-chain acyl-CoA thioesterase YigI">
    <location>
        <begin position="1"/>
        <end position="155"/>
    </location>
</feature>
<feature type="mutagenesis site" description="Loss of activity." evidence="1">
    <original>N</original>
    <variation>A</variation>
    <location>
        <position position="53"/>
    </location>
</feature>
<feature type="mutagenesis site" description="Loss of activity." evidence="1">
    <original>D</original>
    <variation>A</variation>
    <location>
        <position position="69"/>
    </location>
</feature>
<feature type="sequence conflict" description="In Ref. 2; AAA67616." evidence="2" ref="2">
    <original>L</original>
    <variation>V</variation>
    <location>
        <position position="96"/>
    </location>
</feature>
<evidence type="ECO:0000269" key="1">
    <source>
    </source>
</evidence>
<evidence type="ECO:0000305" key="2"/>
<evidence type="ECO:0000305" key="3">
    <source>
    </source>
</evidence>
<name>YIGI_ECOLI</name>
<organism>
    <name type="scientific">Escherichia coli (strain K12)</name>
    <dbReference type="NCBI Taxonomy" id="83333"/>
    <lineage>
        <taxon>Bacteria</taxon>
        <taxon>Pseudomonadati</taxon>
        <taxon>Pseudomonadota</taxon>
        <taxon>Gammaproteobacteria</taxon>
        <taxon>Enterobacterales</taxon>
        <taxon>Enterobacteriaceae</taxon>
        <taxon>Escherichia</taxon>
    </lineage>
</organism>
<comment type="function">
    <text evidence="1">Displays thioesterase activity against medium- to long-chain acyl-CoA substrates (PubMed:35876515). Is involved in the thioesterase-dependent beta-oxidation pathway of (9Z,11E)-octadecadienoate (conjugated linoleic acid or CLA), along with TesB and FadM (PubMed:35876515). In vitro, is active against decanoyl-CoA and palmitoyl-CoA (hexadecanoyl-CoA), but not with acetyl-, butyl- or benzoyl-CoA (PubMed:35876515). Lacks general lipase or amidase activity (PubMed:35876515). Likely plays an important and specific role under natural conditions in permitting the metabolism of unusual carbon sources (PubMed:35876515).</text>
</comment>
<comment type="catalytic activity">
    <reaction evidence="1">
        <text>a fatty acyl-CoA + H2O = a fatty acid + CoA + H(+)</text>
        <dbReference type="Rhea" id="RHEA:16781"/>
        <dbReference type="ChEBI" id="CHEBI:15377"/>
        <dbReference type="ChEBI" id="CHEBI:15378"/>
        <dbReference type="ChEBI" id="CHEBI:28868"/>
        <dbReference type="ChEBI" id="CHEBI:57287"/>
        <dbReference type="ChEBI" id="CHEBI:77636"/>
        <dbReference type="EC" id="3.1.2.20"/>
    </reaction>
</comment>
<comment type="catalytic activity">
    <reaction evidence="1">
        <text>a medium-chain fatty acyl-CoA + H2O = a medium-chain fatty acid + CoA + H(+)</text>
        <dbReference type="Rhea" id="RHEA:68184"/>
        <dbReference type="ChEBI" id="CHEBI:15377"/>
        <dbReference type="ChEBI" id="CHEBI:15378"/>
        <dbReference type="ChEBI" id="CHEBI:57287"/>
        <dbReference type="ChEBI" id="CHEBI:59558"/>
        <dbReference type="ChEBI" id="CHEBI:90546"/>
    </reaction>
</comment>
<comment type="catalytic activity">
    <reaction evidence="1">
        <text>a long-chain fatty acyl-CoA + H2O = a long-chain fatty acid + CoA + H(+)</text>
        <dbReference type="Rhea" id="RHEA:67680"/>
        <dbReference type="ChEBI" id="CHEBI:15377"/>
        <dbReference type="ChEBI" id="CHEBI:15378"/>
        <dbReference type="ChEBI" id="CHEBI:57287"/>
        <dbReference type="ChEBI" id="CHEBI:57560"/>
        <dbReference type="ChEBI" id="CHEBI:83139"/>
    </reaction>
</comment>
<comment type="catalytic activity">
    <reaction evidence="1">
        <text>decanoyl-CoA + H2O = decanoate + CoA + H(+)</text>
        <dbReference type="Rhea" id="RHEA:40059"/>
        <dbReference type="ChEBI" id="CHEBI:15377"/>
        <dbReference type="ChEBI" id="CHEBI:15378"/>
        <dbReference type="ChEBI" id="CHEBI:27689"/>
        <dbReference type="ChEBI" id="CHEBI:57287"/>
        <dbReference type="ChEBI" id="CHEBI:61430"/>
    </reaction>
</comment>
<comment type="catalytic activity">
    <reaction evidence="1">
        <text>hexadecanoyl-CoA + H2O = hexadecanoate + CoA + H(+)</text>
        <dbReference type="Rhea" id="RHEA:16645"/>
        <dbReference type="ChEBI" id="CHEBI:7896"/>
        <dbReference type="ChEBI" id="CHEBI:15377"/>
        <dbReference type="ChEBI" id="CHEBI:15378"/>
        <dbReference type="ChEBI" id="CHEBI:57287"/>
        <dbReference type="ChEBI" id="CHEBI:57379"/>
    </reaction>
</comment>
<comment type="biophysicochemical properties">
    <kinetics>
        <KM evidence="1">19.78 mM for decanoyl-CoA</KM>
        <KM evidence="1">1.04 mM for hexadecanoyl-CoA</KM>
        <text evidence="1">kcat is 1.461 sec(-1) with decanoyl-CoA as substrate. kcat is 3.204 sec(-1) with hexadecanoyl-CoA as substrate.</text>
    </kinetics>
</comment>
<comment type="subcellular location">
    <subcellularLocation>
        <location evidence="3">Cytoplasm</location>
    </subcellularLocation>
</comment>
<comment type="induction">
    <text evidence="1">Induced by acidic environment, high oxygen availability and exposure to aminoglycosides.</text>
</comment>
<comment type="disruption phenotype">
    <text evidence="1">The yigI-tesB-fadM triple knockout mutant shows severely limited, but not completely halted, growth on CLA.</text>
</comment>
<comment type="similarity">
    <text evidence="2">Belongs to the YigI thioesterase family.</text>
</comment>
<comment type="sequence caution" evidence="2">
    <conflict type="erroneous initiation">
        <sequence resource="EMBL-CDS" id="AAA67616"/>
    </conflict>
    <text>Extended N-terminus.</text>
</comment>
<comment type="sequence caution" evidence="2">
    <conflict type="erroneous initiation">
        <sequence resource="EMBL-CDS" id="AAD15042"/>
    </conflict>
    <text>Extended N-terminus.</text>
</comment>
<keyword id="KW-0963">Cytoplasm</keyword>
<keyword id="KW-0378">Hydrolase</keyword>
<keyword id="KW-0443">Lipid metabolism</keyword>
<keyword id="KW-1185">Reference proteome</keyword>
<gene>
    <name type="primary">yigI</name>
    <name type="ordered locus">b3820</name>
    <name type="ordered locus">JW5588</name>
</gene>
<sequence>MSAVLTAEQALKLVGEMFVYHMPFNRALGMELERYEKEFAQLAFKNQPMMVGNWAQSILHGGVIASALDVAAGLVCVGSTLTRHETISEDELRQRLSRMGTIDLRVDYLRPGRGERFTATSSLLRAGNKVAVARVELHNEEQLYIASATATYMVG</sequence>
<proteinExistence type="evidence at protein level"/>
<reference key="1">
    <citation type="submission" date="1993-01" db="EMBL/GenBank/DDBJ databases">
        <title>Physical map of the corA region of the E.coli chromosome.</title>
        <authorList>
            <person name="Ohmori H."/>
        </authorList>
    </citation>
    <scope>NUCLEOTIDE SEQUENCE [GENOMIC DNA]</scope>
    <source>
        <strain>K12</strain>
    </source>
</reference>
<reference key="2">
    <citation type="journal article" date="1992" name="Science">
        <title>Analysis of the Escherichia coli genome: DNA sequence of the region from 84.5 to 86.5 minutes.</title>
        <authorList>
            <person name="Daniels D.L."/>
            <person name="Plunkett G. III"/>
            <person name="Burland V.D."/>
            <person name="Blattner F.R."/>
        </authorList>
    </citation>
    <scope>NUCLEOTIDE SEQUENCE [LARGE SCALE GENOMIC DNA]</scope>
    <source>
        <strain>K12 / MG1655 / ATCC 47076</strain>
    </source>
</reference>
<reference key="3">
    <citation type="journal article" date="1997" name="Science">
        <title>The complete genome sequence of Escherichia coli K-12.</title>
        <authorList>
            <person name="Blattner F.R."/>
            <person name="Plunkett G. III"/>
            <person name="Bloch C.A."/>
            <person name="Perna N.T."/>
            <person name="Burland V."/>
            <person name="Riley M."/>
            <person name="Collado-Vides J."/>
            <person name="Glasner J.D."/>
            <person name="Rode C.K."/>
            <person name="Mayhew G.F."/>
            <person name="Gregor J."/>
            <person name="Davis N.W."/>
            <person name="Kirkpatrick H.A."/>
            <person name="Goeden M.A."/>
            <person name="Rose D.J."/>
            <person name="Mau B."/>
            <person name="Shao Y."/>
        </authorList>
    </citation>
    <scope>NUCLEOTIDE SEQUENCE [LARGE SCALE GENOMIC DNA]</scope>
    <scope>SEQUENCE REVISION TO 96</scope>
    <source>
        <strain>K12 / MG1655 / ATCC 47076</strain>
    </source>
</reference>
<reference key="4">
    <citation type="journal article" date="2006" name="Mol. Syst. Biol.">
        <title>Highly accurate genome sequences of Escherichia coli K-12 strains MG1655 and W3110.</title>
        <authorList>
            <person name="Hayashi K."/>
            <person name="Morooka N."/>
            <person name="Yamamoto Y."/>
            <person name="Fujita K."/>
            <person name="Isono K."/>
            <person name="Choi S."/>
            <person name="Ohtsubo E."/>
            <person name="Baba T."/>
            <person name="Wanner B.L."/>
            <person name="Mori H."/>
            <person name="Horiuchi T."/>
        </authorList>
    </citation>
    <scope>NUCLEOTIDE SEQUENCE [LARGE SCALE GENOMIC DNA]</scope>
    <source>
        <strain>K12 / W3110 / ATCC 27325 / DSM 5911</strain>
    </source>
</reference>
<reference key="5">
    <citation type="journal article" date="1984" name="J. Biochem.">
        <title>The DNA sequence encoding pldA gene, the structural gene for detergent-resistant phospholipase A of E. coli.</title>
        <authorList>
            <person name="Homma H."/>
            <person name="Kobayashi T."/>
            <person name="Chiba N."/>
            <person name="Karasawa K."/>
            <person name="Mizushima H."/>
            <person name="Kudo I."/>
            <person name="Inoue K."/>
            <person name="Ikeda H."/>
            <person name="Sekiguchi M."/>
            <person name="Nojima S."/>
        </authorList>
    </citation>
    <scope>NUCLEOTIDE SEQUENCE [GENOMIC DNA] OF 1-42</scope>
</reference>
<reference key="6">
    <citation type="journal article" date="2022" name="J. Bacteriol.">
        <title>Escherichia coli YigI is a conserved gammaproteobacterial acyl-CoA thioesterase permitting metabolism of unusual fatty acid substrates.</title>
        <authorList>
            <person name="Schmidt M."/>
            <person name="Proctor T."/>
            <person name="Diao R."/>
            <person name="Freddolino P.L."/>
        </authorList>
    </citation>
    <scope>FUNCTION</scope>
    <scope>CATALYTIC ACTIVITY</scope>
    <scope>BIOPHYSICOCHEMICAL PROPERTIES</scope>
    <scope>INDUCTION</scope>
    <scope>DISRUPTION PHENOTYPE</scope>
    <scope>MUTAGENESIS OF ASN-53 AND ASP-69</scope>
    <source>
        <strain>K12 / MG1655 / ATCC 47076</strain>
    </source>
</reference>
<protein>
    <recommendedName>
        <fullName evidence="2">Medium/long-chain acyl-CoA thioesterase YigI</fullName>
        <ecNumber evidence="1">3.1.2.20</ecNumber>
    </recommendedName>
</protein>
<accession>P0ADP2</accession>
<accession>P27845</accession>
<accession>P76761</accession>
<accession>Q2M8C5</accession>